<evidence type="ECO:0000255" key="1">
    <source>
        <dbReference type="HAMAP-Rule" id="MF_00131"/>
    </source>
</evidence>
<sequence>MTTRIDTKFAELKAEGRPALVTYFMGGDPDLETALKVMKALPKAGADVIELGMPFSDPMADGPAIQAAGLRALNAGQTLAKTLYMAAEFRKEDDTTPIVMMGYYNPIYVYGVERFLTDAKASGVDGLIVVDLPSEMDAELCIPAMKAGINFIRLTTPTTDDKRLPKVLHNSSGFVYYVSMNGITGAAIADTAKVGEAVRHIKKSTDLPICVGFGVKTPEQAAAIATHADSVVVGTAIVNAIAGELDEKGKVKGDPVAAATRLVHALAESVRATRLEAAQ</sequence>
<name>TRPA_BRUA2</name>
<comment type="function">
    <text evidence="1">The alpha subunit is responsible for the aldol cleavage of indoleglycerol phosphate to indole and glyceraldehyde 3-phosphate.</text>
</comment>
<comment type="catalytic activity">
    <reaction evidence="1">
        <text>(1S,2R)-1-C-(indol-3-yl)glycerol 3-phosphate + L-serine = D-glyceraldehyde 3-phosphate + L-tryptophan + H2O</text>
        <dbReference type="Rhea" id="RHEA:10532"/>
        <dbReference type="ChEBI" id="CHEBI:15377"/>
        <dbReference type="ChEBI" id="CHEBI:33384"/>
        <dbReference type="ChEBI" id="CHEBI:57912"/>
        <dbReference type="ChEBI" id="CHEBI:58866"/>
        <dbReference type="ChEBI" id="CHEBI:59776"/>
        <dbReference type="EC" id="4.2.1.20"/>
    </reaction>
</comment>
<comment type="pathway">
    <text evidence="1">Amino-acid biosynthesis; L-tryptophan biosynthesis; L-tryptophan from chorismate: step 5/5.</text>
</comment>
<comment type="subunit">
    <text evidence="1">Tetramer of two alpha and two beta chains.</text>
</comment>
<comment type="similarity">
    <text evidence="1">Belongs to the TrpA family.</text>
</comment>
<feature type="chain" id="PRO_1000018171" description="Tryptophan synthase alpha chain">
    <location>
        <begin position="1"/>
        <end position="279"/>
    </location>
</feature>
<feature type="active site" description="Proton acceptor" evidence="1">
    <location>
        <position position="50"/>
    </location>
</feature>
<feature type="active site" description="Proton acceptor" evidence="1">
    <location>
        <position position="61"/>
    </location>
</feature>
<organism>
    <name type="scientific">Brucella abortus (strain 2308)</name>
    <dbReference type="NCBI Taxonomy" id="359391"/>
    <lineage>
        <taxon>Bacteria</taxon>
        <taxon>Pseudomonadati</taxon>
        <taxon>Pseudomonadota</taxon>
        <taxon>Alphaproteobacteria</taxon>
        <taxon>Hyphomicrobiales</taxon>
        <taxon>Brucellaceae</taxon>
        <taxon>Brucella/Ochrobactrum group</taxon>
        <taxon>Brucella</taxon>
    </lineage>
</organism>
<keyword id="KW-0028">Amino-acid biosynthesis</keyword>
<keyword id="KW-0057">Aromatic amino acid biosynthesis</keyword>
<keyword id="KW-0456">Lyase</keyword>
<keyword id="KW-1185">Reference proteome</keyword>
<keyword id="KW-0822">Tryptophan biosynthesis</keyword>
<protein>
    <recommendedName>
        <fullName evidence="1">Tryptophan synthase alpha chain</fullName>
        <ecNumber evidence="1">4.2.1.20</ecNumber>
    </recommendedName>
</protein>
<gene>
    <name evidence="1" type="primary">trpA</name>
    <name type="ordered locus">BAB1_2110</name>
</gene>
<proteinExistence type="inferred from homology"/>
<accession>Q2YQW7</accession>
<dbReference type="EC" id="4.2.1.20" evidence="1"/>
<dbReference type="EMBL" id="AM040264">
    <property type="protein sequence ID" value="CAJ12066.1"/>
    <property type="molecule type" value="Genomic_DNA"/>
</dbReference>
<dbReference type="RefSeq" id="WP_002965172.1">
    <property type="nucleotide sequence ID" value="NZ_KN046823.1"/>
</dbReference>
<dbReference type="SMR" id="Q2YQW7"/>
<dbReference type="STRING" id="359391.BAB1_2110"/>
<dbReference type="GeneID" id="93017585"/>
<dbReference type="KEGG" id="bmf:BAB1_2110"/>
<dbReference type="PATRIC" id="fig|359391.11.peg.1341"/>
<dbReference type="HOGENOM" id="CLU_016734_0_0_5"/>
<dbReference type="PhylomeDB" id="Q2YQW7"/>
<dbReference type="UniPathway" id="UPA00035">
    <property type="reaction ID" value="UER00044"/>
</dbReference>
<dbReference type="Proteomes" id="UP000002719">
    <property type="component" value="Chromosome I"/>
</dbReference>
<dbReference type="GO" id="GO:0005829">
    <property type="term" value="C:cytosol"/>
    <property type="evidence" value="ECO:0007669"/>
    <property type="project" value="TreeGrafter"/>
</dbReference>
<dbReference type="GO" id="GO:0004834">
    <property type="term" value="F:tryptophan synthase activity"/>
    <property type="evidence" value="ECO:0007669"/>
    <property type="project" value="UniProtKB-UniRule"/>
</dbReference>
<dbReference type="CDD" id="cd04724">
    <property type="entry name" value="Tryptophan_synthase_alpha"/>
    <property type="match status" value="1"/>
</dbReference>
<dbReference type="FunFam" id="3.20.20.70:FF:000037">
    <property type="entry name" value="Tryptophan synthase alpha chain"/>
    <property type="match status" value="1"/>
</dbReference>
<dbReference type="Gene3D" id="3.20.20.70">
    <property type="entry name" value="Aldolase class I"/>
    <property type="match status" value="1"/>
</dbReference>
<dbReference type="HAMAP" id="MF_00131">
    <property type="entry name" value="Trp_synth_alpha"/>
    <property type="match status" value="1"/>
</dbReference>
<dbReference type="InterPro" id="IPR013785">
    <property type="entry name" value="Aldolase_TIM"/>
</dbReference>
<dbReference type="InterPro" id="IPR011060">
    <property type="entry name" value="RibuloseP-bd_barrel"/>
</dbReference>
<dbReference type="InterPro" id="IPR018204">
    <property type="entry name" value="Trp_synthase_alpha_AS"/>
</dbReference>
<dbReference type="InterPro" id="IPR002028">
    <property type="entry name" value="Trp_synthase_suA"/>
</dbReference>
<dbReference type="NCBIfam" id="TIGR00262">
    <property type="entry name" value="trpA"/>
    <property type="match status" value="1"/>
</dbReference>
<dbReference type="PANTHER" id="PTHR43406:SF1">
    <property type="entry name" value="TRYPTOPHAN SYNTHASE ALPHA CHAIN, CHLOROPLASTIC"/>
    <property type="match status" value="1"/>
</dbReference>
<dbReference type="PANTHER" id="PTHR43406">
    <property type="entry name" value="TRYPTOPHAN SYNTHASE, ALPHA CHAIN"/>
    <property type="match status" value="1"/>
</dbReference>
<dbReference type="Pfam" id="PF00290">
    <property type="entry name" value="Trp_syntA"/>
    <property type="match status" value="1"/>
</dbReference>
<dbReference type="SUPFAM" id="SSF51366">
    <property type="entry name" value="Ribulose-phoshate binding barrel"/>
    <property type="match status" value="1"/>
</dbReference>
<dbReference type="PROSITE" id="PS00167">
    <property type="entry name" value="TRP_SYNTHASE_ALPHA"/>
    <property type="match status" value="1"/>
</dbReference>
<reference key="1">
    <citation type="journal article" date="2005" name="Infect. Immun.">
        <title>Whole-genome analyses of speciation events in pathogenic Brucellae.</title>
        <authorList>
            <person name="Chain P.S."/>
            <person name="Comerci D.J."/>
            <person name="Tolmasky M.E."/>
            <person name="Larimer F.W."/>
            <person name="Malfatti S.A."/>
            <person name="Vergez L.M."/>
            <person name="Aguero F."/>
            <person name="Land M.L."/>
            <person name="Ugalde R.A."/>
            <person name="Garcia E."/>
        </authorList>
    </citation>
    <scope>NUCLEOTIDE SEQUENCE [LARGE SCALE GENOMIC DNA]</scope>
    <source>
        <strain>2308</strain>
    </source>
</reference>